<reference key="1">
    <citation type="journal article" date="2008" name="J. Bacteriol.">
        <title>The pangenome structure of Escherichia coli: comparative genomic analysis of E. coli commensal and pathogenic isolates.</title>
        <authorList>
            <person name="Rasko D.A."/>
            <person name="Rosovitz M.J."/>
            <person name="Myers G.S.A."/>
            <person name="Mongodin E.F."/>
            <person name="Fricke W.F."/>
            <person name="Gajer P."/>
            <person name="Crabtree J."/>
            <person name="Sebaihia M."/>
            <person name="Thomson N.R."/>
            <person name="Chaudhuri R."/>
            <person name="Henderson I.R."/>
            <person name="Sperandio V."/>
            <person name="Ravel J."/>
        </authorList>
    </citation>
    <scope>NUCLEOTIDE SEQUENCE [LARGE SCALE GENOMIC DNA]</scope>
    <source>
        <strain>E24377A / ETEC</strain>
    </source>
</reference>
<keyword id="KW-0997">Cell inner membrane</keyword>
<keyword id="KW-1003">Cell membrane</keyword>
<keyword id="KW-0407">Ion channel</keyword>
<keyword id="KW-0406">Ion transport</keyword>
<keyword id="KW-0472">Membrane</keyword>
<keyword id="KW-1185">Reference proteome</keyword>
<keyword id="KW-0812">Transmembrane</keyword>
<keyword id="KW-1133">Transmembrane helix</keyword>
<keyword id="KW-0813">Transport</keyword>
<proteinExistence type="inferred from homology"/>
<comment type="function">
    <text evidence="1">Channel that opens in response to stretch forces in the membrane lipid bilayer. May participate in the regulation of osmotic pressure changes within the cell.</text>
</comment>
<comment type="subunit">
    <text evidence="1">Homopentamer.</text>
</comment>
<comment type="subcellular location">
    <subcellularLocation>
        <location evidence="1">Cell inner membrane</location>
        <topology evidence="1">Multi-pass membrane protein</topology>
    </subcellularLocation>
</comment>
<comment type="similarity">
    <text evidence="1">Belongs to the MscL family.</text>
</comment>
<accession>A7ZSH9</accession>
<name>MSCL_ECO24</name>
<gene>
    <name evidence="1" type="primary">mscL</name>
    <name type="ordered locus">EcE24377A_3774</name>
</gene>
<protein>
    <recommendedName>
        <fullName evidence="1">Large-conductance mechanosensitive channel</fullName>
    </recommendedName>
</protein>
<evidence type="ECO:0000255" key="1">
    <source>
        <dbReference type="HAMAP-Rule" id="MF_00115"/>
    </source>
</evidence>
<organism>
    <name type="scientific">Escherichia coli O139:H28 (strain E24377A / ETEC)</name>
    <dbReference type="NCBI Taxonomy" id="331111"/>
    <lineage>
        <taxon>Bacteria</taxon>
        <taxon>Pseudomonadati</taxon>
        <taxon>Pseudomonadota</taxon>
        <taxon>Gammaproteobacteria</taxon>
        <taxon>Enterobacterales</taxon>
        <taxon>Enterobacteriaceae</taxon>
        <taxon>Escherichia</taxon>
    </lineage>
</organism>
<dbReference type="EMBL" id="CP000800">
    <property type="protein sequence ID" value="ABV16606.1"/>
    <property type="molecule type" value="Genomic_DNA"/>
</dbReference>
<dbReference type="RefSeq" id="WP_000022442.1">
    <property type="nucleotide sequence ID" value="NC_009801.1"/>
</dbReference>
<dbReference type="SMR" id="A7ZSH9"/>
<dbReference type="GeneID" id="75173461"/>
<dbReference type="KEGG" id="ecw:EcE24377A_3774"/>
<dbReference type="HOGENOM" id="CLU_095787_0_0_6"/>
<dbReference type="Proteomes" id="UP000001122">
    <property type="component" value="Chromosome"/>
</dbReference>
<dbReference type="GO" id="GO:0005886">
    <property type="term" value="C:plasma membrane"/>
    <property type="evidence" value="ECO:0007669"/>
    <property type="project" value="UniProtKB-SubCell"/>
</dbReference>
<dbReference type="GO" id="GO:0008381">
    <property type="term" value="F:mechanosensitive monoatomic ion channel activity"/>
    <property type="evidence" value="ECO:0007669"/>
    <property type="project" value="UniProtKB-UniRule"/>
</dbReference>
<dbReference type="FunFam" id="1.10.1200.120:FF:000001">
    <property type="entry name" value="Large-conductance mechanosensitive channel"/>
    <property type="match status" value="1"/>
</dbReference>
<dbReference type="Gene3D" id="1.10.1200.120">
    <property type="entry name" value="Large-conductance mechanosensitive channel, MscL, domain 1"/>
    <property type="match status" value="1"/>
</dbReference>
<dbReference type="HAMAP" id="MF_00115">
    <property type="entry name" value="MscL"/>
    <property type="match status" value="1"/>
</dbReference>
<dbReference type="InterPro" id="IPR019823">
    <property type="entry name" value="Mechanosensitive_channel_CS"/>
</dbReference>
<dbReference type="InterPro" id="IPR001185">
    <property type="entry name" value="MS_channel"/>
</dbReference>
<dbReference type="InterPro" id="IPR037673">
    <property type="entry name" value="MSC/AndL"/>
</dbReference>
<dbReference type="InterPro" id="IPR036019">
    <property type="entry name" value="MscL_channel"/>
</dbReference>
<dbReference type="NCBIfam" id="TIGR00220">
    <property type="entry name" value="mscL"/>
    <property type="match status" value="1"/>
</dbReference>
<dbReference type="NCBIfam" id="NF001841">
    <property type="entry name" value="PRK00567.1-1"/>
    <property type="match status" value="1"/>
</dbReference>
<dbReference type="NCBIfam" id="NF001843">
    <property type="entry name" value="PRK00567.1-4"/>
    <property type="match status" value="1"/>
</dbReference>
<dbReference type="PANTHER" id="PTHR30266:SF2">
    <property type="entry name" value="LARGE-CONDUCTANCE MECHANOSENSITIVE CHANNEL"/>
    <property type="match status" value="1"/>
</dbReference>
<dbReference type="PANTHER" id="PTHR30266">
    <property type="entry name" value="MECHANOSENSITIVE CHANNEL MSCL"/>
    <property type="match status" value="1"/>
</dbReference>
<dbReference type="Pfam" id="PF01741">
    <property type="entry name" value="MscL"/>
    <property type="match status" value="1"/>
</dbReference>
<dbReference type="PRINTS" id="PR01264">
    <property type="entry name" value="MECHCHANNEL"/>
</dbReference>
<dbReference type="SUPFAM" id="SSF81330">
    <property type="entry name" value="Gated mechanosensitive channel"/>
    <property type="match status" value="1"/>
</dbReference>
<dbReference type="PROSITE" id="PS01327">
    <property type="entry name" value="MSCL"/>
    <property type="match status" value="1"/>
</dbReference>
<sequence length="136" mass="14957">MSIIKEFREFAMRGNVVDLAVGVIIGAAFGKIVSSLVADIIMPPLGLLIGGIDFKQFAVTLRDAQGDIPAVVMHYGVFIQNVFDFLIVAFAIFMAIKLINKLNRKKEEPAAAPAPTKEEVLLTEIRDLLKEQNNRS</sequence>
<feature type="chain" id="PRO_1000057754" description="Large-conductance mechanosensitive channel">
    <location>
        <begin position="1"/>
        <end position="136"/>
    </location>
</feature>
<feature type="transmembrane region" description="Helical" evidence="1">
    <location>
        <begin position="10"/>
        <end position="30"/>
    </location>
</feature>
<feature type="transmembrane region" description="Helical" evidence="1">
    <location>
        <begin position="76"/>
        <end position="96"/>
    </location>
</feature>